<organism>
    <name type="scientific">Arabis hirsuta</name>
    <name type="common">Hairy rock-cress</name>
    <name type="synonym">Turritis hirsuta</name>
    <dbReference type="NCBI Taxonomy" id="78191"/>
    <lineage>
        <taxon>Eukaryota</taxon>
        <taxon>Viridiplantae</taxon>
        <taxon>Streptophyta</taxon>
        <taxon>Embryophyta</taxon>
        <taxon>Tracheophyta</taxon>
        <taxon>Spermatophyta</taxon>
        <taxon>Magnoliopsida</taxon>
        <taxon>eudicotyledons</taxon>
        <taxon>Gunneridae</taxon>
        <taxon>Pentapetalae</taxon>
        <taxon>rosids</taxon>
        <taxon>malvids</taxon>
        <taxon>Brassicales</taxon>
        <taxon>Brassicaceae</taxon>
        <taxon>Arabideae</taxon>
        <taxon>Arabis</taxon>
    </lineage>
</organism>
<dbReference type="EMBL" id="AP009369">
    <property type="protein sequence ID" value="BAF50044.1"/>
    <property type="molecule type" value="Genomic_DNA"/>
</dbReference>
<dbReference type="RefSeq" id="YP_001123220.1">
    <property type="nucleotide sequence ID" value="NC_009268.1"/>
</dbReference>
<dbReference type="GeneID" id="4962603"/>
<dbReference type="GO" id="GO:0009507">
    <property type="term" value="C:chloroplast"/>
    <property type="evidence" value="ECO:0007669"/>
    <property type="project" value="UniProtKB-SubCell"/>
</dbReference>
<dbReference type="GO" id="GO:1990904">
    <property type="term" value="C:ribonucleoprotein complex"/>
    <property type="evidence" value="ECO:0007669"/>
    <property type="project" value="UniProtKB-KW"/>
</dbReference>
<dbReference type="GO" id="GO:0005840">
    <property type="term" value="C:ribosome"/>
    <property type="evidence" value="ECO:0007669"/>
    <property type="project" value="UniProtKB-KW"/>
</dbReference>
<dbReference type="GO" id="GO:0003735">
    <property type="term" value="F:structural constituent of ribosome"/>
    <property type="evidence" value="ECO:0007669"/>
    <property type="project" value="InterPro"/>
</dbReference>
<dbReference type="GO" id="GO:0006412">
    <property type="term" value="P:translation"/>
    <property type="evidence" value="ECO:0007669"/>
    <property type="project" value="UniProtKB-UniRule"/>
</dbReference>
<dbReference type="FunFam" id="2.20.28.120:FF:000004">
    <property type="entry name" value="50S ribosomal protein L33, chloroplastic"/>
    <property type="match status" value="1"/>
</dbReference>
<dbReference type="Gene3D" id="2.20.28.120">
    <property type="entry name" value="Ribosomal protein L33"/>
    <property type="match status" value="1"/>
</dbReference>
<dbReference type="HAMAP" id="MF_00294">
    <property type="entry name" value="Ribosomal_bL33"/>
    <property type="match status" value="1"/>
</dbReference>
<dbReference type="InterPro" id="IPR001705">
    <property type="entry name" value="Ribosomal_bL33"/>
</dbReference>
<dbReference type="InterPro" id="IPR018264">
    <property type="entry name" value="Ribosomal_bL33_CS"/>
</dbReference>
<dbReference type="InterPro" id="IPR038584">
    <property type="entry name" value="Ribosomal_bL33_sf"/>
</dbReference>
<dbReference type="InterPro" id="IPR011332">
    <property type="entry name" value="Ribosomal_zn-bd"/>
</dbReference>
<dbReference type="NCBIfam" id="NF001764">
    <property type="entry name" value="PRK00504.1"/>
    <property type="match status" value="1"/>
</dbReference>
<dbReference type="NCBIfam" id="NF001860">
    <property type="entry name" value="PRK00595.1"/>
    <property type="match status" value="1"/>
</dbReference>
<dbReference type="NCBIfam" id="TIGR01023">
    <property type="entry name" value="rpmG_bact"/>
    <property type="match status" value="1"/>
</dbReference>
<dbReference type="PANTHER" id="PTHR43168">
    <property type="entry name" value="50S RIBOSOMAL PROTEIN L33, CHLOROPLASTIC"/>
    <property type="match status" value="1"/>
</dbReference>
<dbReference type="PANTHER" id="PTHR43168:SF2">
    <property type="entry name" value="LARGE RIBOSOMAL SUBUNIT PROTEIN BL33C"/>
    <property type="match status" value="1"/>
</dbReference>
<dbReference type="Pfam" id="PF00471">
    <property type="entry name" value="Ribosomal_L33"/>
    <property type="match status" value="1"/>
</dbReference>
<dbReference type="SUPFAM" id="SSF57829">
    <property type="entry name" value="Zn-binding ribosomal proteins"/>
    <property type="match status" value="1"/>
</dbReference>
<dbReference type="PROSITE" id="PS00582">
    <property type="entry name" value="RIBOSOMAL_L33"/>
    <property type="match status" value="1"/>
</dbReference>
<protein>
    <recommendedName>
        <fullName evidence="1">Large ribosomal subunit protein bL33c</fullName>
    </recommendedName>
    <alternativeName>
        <fullName evidence="2">50S ribosomal protein L33, chloroplastic</fullName>
    </alternativeName>
</protein>
<accession>A4QK39</accession>
<proteinExistence type="inferred from homology"/>
<reference key="1">
    <citation type="submission" date="2007-03" db="EMBL/GenBank/DDBJ databases">
        <title>Sequencing analysis of Arabis hirsuta chloroplast DNA.</title>
        <authorList>
            <person name="Hosouchi T."/>
            <person name="Tsuruoka H."/>
            <person name="Kotani H."/>
        </authorList>
    </citation>
    <scope>NUCLEOTIDE SEQUENCE [LARGE SCALE GENOMIC DNA]</scope>
</reference>
<comment type="subcellular location">
    <subcellularLocation>
        <location>Plastid</location>
        <location>Chloroplast</location>
    </subcellularLocation>
</comment>
<comment type="similarity">
    <text evidence="1">Belongs to the bacterial ribosomal protein bL33 family.</text>
</comment>
<name>RK33_ARAHI</name>
<keyword id="KW-0150">Chloroplast</keyword>
<keyword id="KW-0934">Plastid</keyword>
<keyword id="KW-0687">Ribonucleoprotein</keyword>
<keyword id="KW-0689">Ribosomal protein</keyword>
<feature type="chain" id="PRO_0000356784" description="Large ribosomal subunit protein bL33c">
    <location>
        <begin position="1"/>
        <end position="66"/>
    </location>
</feature>
<gene>
    <name evidence="1" type="primary">rpl33</name>
</gene>
<evidence type="ECO:0000255" key="1">
    <source>
        <dbReference type="HAMAP-Rule" id="MF_00294"/>
    </source>
</evidence>
<evidence type="ECO:0000305" key="2"/>
<sequence length="66" mass="7692">MAKGKDVRVTIILECTSCVRNDIKKESAGISRYITQKNRHNTPSRLELRKFCPYCFKHTIHGEIKK</sequence>
<geneLocation type="chloroplast"/>